<comment type="function">
    <text evidence="1">Negatively regulates the transcription of the flagellar master operon flhDC by binding to the upstream region of the operon.</text>
</comment>
<comment type="similarity">
    <text evidence="2">Belongs to the LysR transcriptional regulatory family.</text>
</comment>
<gene>
    <name evidence="1" type="primary">hdfR</name>
    <name type="ordered locus">ECIAI1_3951</name>
</gene>
<sequence>MDTELLKTFLEVSRTRHFGRAAESLYLTQSAVSFRIRQLENQLGVNLFTRHRNNIRLTAAGEKLLPYAETLMSTWQAARKEVAHTSRHNEFSIGASASLWECMLNQWLGRLYQNQDAHTGLQFEARIAQRQSLVKQLHERQLDLLITTEAPKMDEFSSQLLGYFTLALYTSAPSKLKGDLNYLRLEWGPDFQQHEAGLIGADEVPILTTSSAELAQQQIAMLNGCTWLPVSWARKKGGLHTVVDSTTLSRPLYAIWLQNSDKNTLIRDLLKINVLDEVY</sequence>
<evidence type="ECO:0000255" key="1">
    <source>
        <dbReference type="HAMAP-Rule" id="MF_01233"/>
    </source>
</evidence>
<evidence type="ECO:0000305" key="2"/>
<feature type="chain" id="PRO_1000139665" description="HTH-type transcriptional regulator HdfR">
    <location>
        <begin position="1"/>
        <end position="279"/>
    </location>
</feature>
<feature type="domain" description="HTH lysR-type" evidence="1">
    <location>
        <begin position="1"/>
        <end position="58"/>
    </location>
</feature>
<feature type="DNA-binding region" description="H-T-H motif" evidence="1">
    <location>
        <begin position="18"/>
        <end position="37"/>
    </location>
</feature>
<protein>
    <recommendedName>
        <fullName evidence="1">HTH-type transcriptional regulator HdfR</fullName>
    </recommendedName>
    <alternativeName>
        <fullName evidence="1">H-NS-dependent flhDC regulator</fullName>
    </alternativeName>
</protein>
<organism>
    <name type="scientific">Escherichia coli O8 (strain IAI1)</name>
    <dbReference type="NCBI Taxonomy" id="585034"/>
    <lineage>
        <taxon>Bacteria</taxon>
        <taxon>Pseudomonadati</taxon>
        <taxon>Pseudomonadota</taxon>
        <taxon>Gammaproteobacteria</taxon>
        <taxon>Enterobacterales</taxon>
        <taxon>Enterobacteriaceae</taxon>
        <taxon>Escherichia</taxon>
    </lineage>
</organism>
<dbReference type="EMBL" id="CU928160">
    <property type="protein sequence ID" value="CAR00736.1"/>
    <property type="molecule type" value="Genomic_DNA"/>
</dbReference>
<dbReference type="RefSeq" id="WP_000379246.1">
    <property type="nucleotide sequence ID" value="NC_011741.1"/>
</dbReference>
<dbReference type="SMR" id="B7M5B2"/>
<dbReference type="GeneID" id="75204755"/>
<dbReference type="KEGG" id="ecr:ECIAI1_3951"/>
<dbReference type="HOGENOM" id="CLU_039613_8_2_6"/>
<dbReference type="GO" id="GO:0003677">
    <property type="term" value="F:DNA binding"/>
    <property type="evidence" value="ECO:0007669"/>
    <property type="project" value="UniProtKB-KW"/>
</dbReference>
<dbReference type="GO" id="GO:0003700">
    <property type="term" value="F:DNA-binding transcription factor activity"/>
    <property type="evidence" value="ECO:0007669"/>
    <property type="project" value="UniProtKB-UniRule"/>
</dbReference>
<dbReference type="GO" id="GO:0045892">
    <property type="term" value="P:negative regulation of DNA-templated transcription"/>
    <property type="evidence" value="ECO:0007669"/>
    <property type="project" value="UniProtKB-UniRule"/>
</dbReference>
<dbReference type="FunFam" id="1.10.10.10:FF:000001">
    <property type="entry name" value="LysR family transcriptional regulator"/>
    <property type="match status" value="1"/>
</dbReference>
<dbReference type="Gene3D" id="3.40.190.10">
    <property type="entry name" value="Periplasmic binding protein-like II"/>
    <property type="match status" value="2"/>
</dbReference>
<dbReference type="Gene3D" id="1.10.10.10">
    <property type="entry name" value="Winged helix-like DNA-binding domain superfamily/Winged helix DNA-binding domain"/>
    <property type="match status" value="1"/>
</dbReference>
<dbReference type="HAMAP" id="MF_01233">
    <property type="entry name" value="HTH_type_HdfR"/>
    <property type="match status" value="1"/>
</dbReference>
<dbReference type="InterPro" id="IPR050176">
    <property type="entry name" value="LTTR"/>
</dbReference>
<dbReference type="InterPro" id="IPR005119">
    <property type="entry name" value="LysR_subst-bd"/>
</dbReference>
<dbReference type="InterPro" id="IPR020890">
    <property type="entry name" value="Tscrpt_reg_HTH_HdfR"/>
</dbReference>
<dbReference type="InterPro" id="IPR000847">
    <property type="entry name" value="Tscrpt_reg_HTH_LysR"/>
</dbReference>
<dbReference type="InterPro" id="IPR036388">
    <property type="entry name" value="WH-like_DNA-bd_sf"/>
</dbReference>
<dbReference type="InterPro" id="IPR036390">
    <property type="entry name" value="WH_DNA-bd_sf"/>
</dbReference>
<dbReference type="NCBIfam" id="NF002946">
    <property type="entry name" value="PRK03601.1"/>
    <property type="match status" value="1"/>
</dbReference>
<dbReference type="PANTHER" id="PTHR30579:SF8">
    <property type="entry name" value="HTH-TYPE TRANSCRIPTIONAL REGULATOR HDFR"/>
    <property type="match status" value="1"/>
</dbReference>
<dbReference type="PANTHER" id="PTHR30579">
    <property type="entry name" value="TRANSCRIPTIONAL REGULATOR"/>
    <property type="match status" value="1"/>
</dbReference>
<dbReference type="Pfam" id="PF00126">
    <property type="entry name" value="HTH_1"/>
    <property type="match status" value="1"/>
</dbReference>
<dbReference type="Pfam" id="PF03466">
    <property type="entry name" value="LysR_substrate"/>
    <property type="match status" value="1"/>
</dbReference>
<dbReference type="PRINTS" id="PR00039">
    <property type="entry name" value="HTHLYSR"/>
</dbReference>
<dbReference type="SUPFAM" id="SSF53850">
    <property type="entry name" value="Periplasmic binding protein-like II"/>
    <property type="match status" value="1"/>
</dbReference>
<dbReference type="SUPFAM" id="SSF46785">
    <property type="entry name" value="Winged helix' DNA-binding domain"/>
    <property type="match status" value="1"/>
</dbReference>
<dbReference type="PROSITE" id="PS50931">
    <property type="entry name" value="HTH_LYSR"/>
    <property type="match status" value="1"/>
</dbReference>
<proteinExistence type="inferred from homology"/>
<keyword id="KW-0238">DNA-binding</keyword>
<keyword id="KW-0678">Repressor</keyword>
<keyword id="KW-0804">Transcription</keyword>
<keyword id="KW-0805">Transcription regulation</keyword>
<reference key="1">
    <citation type="journal article" date="2009" name="PLoS Genet.">
        <title>Organised genome dynamics in the Escherichia coli species results in highly diverse adaptive paths.</title>
        <authorList>
            <person name="Touchon M."/>
            <person name="Hoede C."/>
            <person name="Tenaillon O."/>
            <person name="Barbe V."/>
            <person name="Baeriswyl S."/>
            <person name="Bidet P."/>
            <person name="Bingen E."/>
            <person name="Bonacorsi S."/>
            <person name="Bouchier C."/>
            <person name="Bouvet O."/>
            <person name="Calteau A."/>
            <person name="Chiapello H."/>
            <person name="Clermont O."/>
            <person name="Cruveiller S."/>
            <person name="Danchin A."/>
            <person name="Diard M."/>
            <person name="Dossat C."/>
            <person name="Karoui M.E."/>
            <person name="Frapy E."/>
            <person name="Garry L."/>
            <person name="Ghigo J.M."/>
            <person name="Gilles A.M."/>
            <person name="Johnson J."/>
            <person name="Le Bouguenec C."/>
            <person name="Lescat M."/>
            <person name="Mangenot S."/>
            <person name="Martinez-Jehanne V."/>
            <person name="Matic I."/>
            <person name="Nassif X."/>
            <person name="Oztas S."/>
            <person name="Petit M.A."/>
            <person name="Pichon C."/>
            <person name="Rouy Z."/>
            <person name="Ruf C.S."/>
            <person name="Schneider D."/>
            <person name="Tourret J."/>
            <person name="Vacherie B."/>
            <person name="Vallenet D."/>
            <person name="Medigue C."/>
            <person name="Rocha E.P.C."/>
            <person name="Denamur E."/>
        </authorList>
    </citation>
    <scope>NUCLEOTIDE SEQUENCE [LARGE SCALE GENOMIC DNA]</scope>
    <source>
        <strain>IAI1</strain>
    </source>
</reference>
<name>HDFR_ECO8A</name>
<accession>B7M5B2</accession>